<organism>
    <name type="scientific">Danio rerio</name>
    <name type="common">Zebrafish</name>
    <name type="synonym">Brachydanio rerio</name>
    <dbReference type="NCBI Taxonomy" id="7955"/>
    <lineage>
        <taxon>Eukaryota</taxon>
        <taxon>Metazoa</taxon>
        <taxon>Chordata</taxon>
        <taxon>Craniata</taxon>
        <taxon>Vertebrata</taxon>
        <taxon>Euteleostomi</taxon>
        <taxon>Actinopterygii</taxon>
        <taxon>Neopterygii</taxon>
        <taxon>Teleostei</taxon>
        <taxon>Ostariophysi</taxon>
        <taxon>Cypriniformes</taxon>
        <taxon>Danionidae</taxon>
        <taxon>Danioninae</taxon>
        <taxon>Danio</taxon>
    </lineage>
</organism>
<comment type="function">
    <text evidence="1">Binds hydrophobic ligands, such as cholate, in the cytoplasm. May be involved in intracellular lipid transport (By similarity). Binds one cholate per subunit.</text>
</comment>
<comment type="subcellular location">
    <subcellularLocation>
        <location evidence="1">Cytoplasm</location>
    </subcellularLocation>
</comment>
<comment type="tissue specificity">
    <text evidence="2 3 4 5">Expressed in the developing embryonic liver from 48 hpf. Also expressed in the liver of 5-day-old larvae. In adults, primarily expressed in the liver, with weak expression in the testis and intestine.</text>
</comment>
<comment type="developmental stage">
    <text evidence="7">Expressed in the embryo at 6 dpf to 8 dpf.</text>
</comment>
<comment type="domain">
    <text>Forms a beta-barrel structure that accommodates hydrophobic ligands in its interior.</text>
</comment>
<comment type="miscellaneous">
    <text>A member of the basic liver-type FABPs, which are only found, thus far, in non-mammalian vertebrates.</text>
</comment>
<comment type="similarity">
    <text evidence="8">Belongs to the calycin superfamily. Fatty-acid binding protein (FABP) family.</text>
</comment>
<comment type="caution">
    <text evidence="8">PubMed:12633865 reports expression in the ventral endoderm at 36 hpf, whereas PubMed:16857010 does not detect expression this early. The different timings may reflect strain-specific differences.</text>
</comment>
<feature type="chain" id="PRO_0000312344" description="Fatty acid-binding protein 10-A, liver basic">
    <location>
        <begin position="1"/>
        <end position="126"/>
    </location>
</feature>
<feature type="binding site" evidence="6">
    <location>
        <position position="57"/>
    </location>
    <ligand>
        <name>cholate</name>
        <dbReference type="ChEBI" id="CHEBI:29747"/>
    </ligand>
</feature>
<feature type="binding site" evidence="1">
    <location>
        <position position="77"/>
    </location>
    <ligand>
        <name>cholate</name>
        <dbReference type="ChEBI" id="CHEBI:29747"/>
    </ligand>
</feature>
<feature type="binding site" evidence="1">
    <location>
        <position position="99"/>
    </location>
    <ligand>
        <name>cholate</name>
        <dbReference type="ChEBI" id="CHEBI:29747"/>
    </ligand>
</feature>
<feature type="binding site" evidence="1">
    <location>
        <position position="101"/>
    </location>
    <ligand>
        <name>cholate</name>
        <dbReference type="ChEBI" id="CHEBI:29747"/>
    </ligand>
</feature>
<feature type="mutagenesis site" description="No effect on cholate binding stoichiometry." evidence="6">
    <original>G</original>
    <variation>R</variation>
    <location>
        <position position="56"/>
    </location>
</feature>
<feature type="mutagenesis site" description="Changes cholate binding stoichiometry so that 2 cholate molecules are bound per subunit." evidence="6">
    <original>C</original>
    <variation>T</variation>
    <location>
        <position position="92"/>
    </location>
</feature>
<feature type="strand" evidence="9">
    <location>
        <begin position="5"/>
        <end position="14"/>
    </location>
</feature>
<feature type="helix" evidence="9">
    <location>
        <begin position="15"/>
        <end position="21"/>
    </location>
</feature>
<feature type="helix" evidence="9">
    <location>
        <begin position="26"/>
        <end position="31"/>
    </location>
</feature>
<feature type="turn" evidence="9">
    <location>
        <begin position="32"/>
        <end position="34"/>
    </location>
</feature>
<feature type="strand" evidence="9">
    <location>
        <begin position="38"/>
        <end position="44"/>
    </location>
</feature>
<feature type="strand" evidence="9">
    <location>
        <begin position="47"/>
        <end position="54"/>
    </location>
</feature>
<feature type="strand" evidence="9">
    <location>
        <begin position="57"/>
        <end position="64"/>
    </location>
</feature>
<feature type="strand" evidence="9">
    <location>
        <begin position="67"/>
        <end position="72"/>
    </location>
</feature>
<feature type="strand" evidence="9">
    <location>
        <begin position="78"/>
        <end position="82"/>
    </location>
</feature>
<feature type="strand" evidence="9">
    <location>
        <begin position="84"/>
        <end position="86"/>
    </location>
</feature>
<feature type="strand" evidence="9">
    <location>
        <begin position="89"/>
        <end position="93"/>
    </location>
</feature>
<feature type="strand" evidence="9">
    <location>
        <begin position="98"/>
        <end position="104"/>
    </location>
</feature>
<feature type="strand" evidence="9">
    <location>
        <begin position="107"/>
        <end position="114"/>
    </location>
</feature>
<feature type="strand" evidence="9">
    <location>
        <begin position="117"/>
        <end position="125"/>
    </location>
</feature>
<dbReference type="EMBL" id="AF254642">
    <property type="protein sequence ID" value="AAF67743.1"/>
    <property type="molecule type" value="mRNA"/>
</dbReference>
<dbReference type="EMBL" id="BC076219">
    <property type="protein sequence ID" value="AAH76219.1"/>
    <property type="molecule type" value="mRNA"/>
</dbReference>
<dbReference type="EMBL" id="BC081518">
    <property type="protein sequence ID" value="AAH81518.1"/>
    <property type="molecule type" value="mRNA"/>
</dbReference>
<dbReference type="EMBL" id="AF512998">
    <property type="protein sequence ID" value="AAM47005.1"/>
    <property type="molecule type" value="Genomic_DNA"/>
</dbReference>
<dbReference type="RefSeq" id="NP_694492.1">
    <property type="nucleotide sequence ID" value="NM_152960.1"/>
</dbReference>
<dbReference type="PDB" id="2QO4">
    <property type="method" value="X-ray"/>
    <property type="resolution" value="1.50 A"/>
    <property type="chains" value="A=1-126"/>
</dbReference>
<dbReference type="PDB" id="2QO5">
    <property type="method" value="X-ray"/>
    <property type="resolution" value="1.50 A"/>
    <property type="chains" value="A=2-126"/>
</dbReference>
<dbReference type="PDB" id="2QO6">
    <property type="method" value="X-ray"/>
    <property type="resolution" value="1.90 A"/>
    <property type="chains" value="A=1-126"/>
</dbReference>
<dbReference type="PDBsum" id="2QO4"/>
<dbReference type="PDBsum" id="2QO5"/>
<dbReference type="PDBsum" id="2QO6"/>
<dbReference type="SMR" id="Q9I8L5"/>
<dbReference type="FunCoup" id="Q9I8L5">
    <property type="interactions" value="3"/>
</dbReference>
<dbReference type="STRING" id="7955.ENSDARP00000056094"/>
<dbReference type="TCDB" id="8.A.33.1.4">
    <property type="family name" value="the fatty acid binding protein (fabp) family"/>
</dbReference>
<dbReference type="PaxDb" id="7955-ENSDARP00000056094"/>
<dbReference type="Ensembl" id="ENSDART00000056095">
    <property type="protein sequence ID" value="ENSDARP00000056094"/>
    <property type="gene ID" value="ENSDARG00000038439"/>
</dbReference>
<dbReference type="GeneID" id="171481"/>
<dbReference type="KEGG" id="dre:171481"/>
<dbReference type="AGR" id="ZFIN:ZDB-GENE-020318-1"/>
<dbReference type="CTD" id="171481"/>
<dbReference type="ZFIN" id="ZDB-GENE-020318-1">
    <property type="gene designation" value="fabp10a"/>
</dbReference>
<dbReference type="eggNOG" id="KOG4015">
    <property type="taxonomic scope" value="Eukaryota"/>
</dbReference>
<dbReference type="HOGENOM" id="CLU_113772_4_1_1"/>
<dbReference type="InParanoid" id="Q9I8L5"/>
<dbReference type="OMA" id="GKFCHVQ"/>
<dbReference type="OrthoDB" id="8501868at2759"/>
<dbReference type="PhylomeDB" id="Q9I8L5"/>
<dbReference type="TreeFam" id="TF330348"/>
<dbReference type="EvolutionaryTrace" id="Q9I8L5"/>
<dbReference type="PRO" id="PR:Q9I8L5"/>
<dbReference type="Proteomes" id="UP000000437">
    <property type="component" value="Chromosome 16"/>
</dbReference>
<dbReference type="Bgee" id="ENSDARG00000038439">
    <property type="expression patterns" value="Expressed in liver and 18 other cell types or tissues"/>
</dbReference>
<dbReference type="ExpressionAtlas" id="Q9I8L5">
    <property type="expression patterns" value="baseline and differential"/>
</dbReference>
<dbReference type="GO" id="GO:0005829">
    <property type="term" value="C:cytosol"/>
    <property type="evidence" value="ECO:0000318"/>
    <property type="project" value="GO_Central"/>
</dbReference>
<dbReference type="GO" id="GO:0005634">
    <property type="term" value="C:nucleus"/>
    <property type="evidence" value="ECO:0000318"/>
    <property type="project" value="GO_Central"/>
</dbReference>
<dbReference type="GO" id="GO:0032052">
    <property type="term" value="F:bile acid binding"/>
    <property type="evidence" value="ECO:0000314"/>
    <property type="project" value="ZFIN"/>
</dbReference>
<dbReference type="GO" id="GO:0005504">
    <property type="term" value="F:fatty acid binding"/>
    <property type="evidence" value="ECO:0000318"/>
    <property type="project" value="GO_Central"/>
</dbReference>
<dbReference type="GO" id="GO:0015908">
    <property type="term" value="P:fatty acid transport"/>
    <property type="evidence" value="ECO:0000318"/>
    <property type="project" value="GO_Central"/>
</dbReference>
<dbReference type="CDD" id="cd19447">
    <property type="entry name" value="L-BABP-like"/>
    <property type="match status" value="1"/>
</dbReference>
<dbReference type="FunFam" id="2.40.128.20:FF:000006">
    <property type="entry name" value="Fatty acid-binding protein, liver"/>
    <property type="match status" value="1"/>
</dbReference>
<dbReference type="Gene3D" id="2.40.128.20">
    <property type="match status" value="1"/>
</dbReference>
<dbReference type="InterPro" id="IPR012674">
    <property type="entry name" value="Calycin"/>
</dbReference>
<dbReference type="InterPro" id="IPR000463">
    <property type="entry name" value="Fatty_acid-bd"/>
</dbReference>
<dbReference type="InterPro" id="IPR031259">
    <property type="entry name" value="ILBP"/>
</dbReference>
<dbReference type="PANTHER" id="PTHR11955">
    <property type="entry name" value="FATTY ACID BINDING PROTEIN"/>
    <property type="match status" value="1"/>
</dbReference>
<dbReference type="Pfam" id="PF14651">
    <property type="entry name" value="Lipocalin_7"/>
    <property type="match status" value="1"/>
</dbReference>
<dbReference type="PRINTS" id="PR00178">
    <property type="entry name" value="FATTYACIDBP"/>
</dbReference>
<dbReference type="SUPFAM" id="SSF50814">
    <property type="entry name" value="Lipocalins"/>
    <property type="match status" value="1"/>
</dbReference>
<dbReference type="PROSITE" id="PS00214">
    <property type="entry name" value="FABP"/>
    <property type="match status" value="1"/>
</dbReference>
<name>FA10A_DANRE</name>
<proteinExistence type="evidence at protein level"/>
<gene>
    <name type="primary">fabp10a</name>
    <name type="synonym">fabp10</name>
    <name type="ORF">zgc:103719</name>
    <name type="ORF">zgc:92741</name>
</gene>
<evidence type="ECO:0000250" key="1"/>
<evidence type="ECO:0000269" key="2">
    <source>
    </source>
</evidence>
<evidence type="ECO:0000269" key="3">
    <source>
    </source>
</evidence>
<evidence type="ECO:0000269" key="4">
    <source>
    </source>
</evidence>
<evidence type="ECO:0000269" key="5">
    <source>
    </source>
</evidence>
<evidence type="ECO:0000269" key="6">
    <source>
    </source>
</evidence>
<evidence type="ECO:0000269" key="7">
    <source>
    </source>
</evidence>
<evidence type="ECO:0000305" key="8"/>
<evidence type="ECO:0007829" key="9">
    <source>
        <dbReference type="PDB" id="2QO4"/>
    </source>
</evidence>
<reference key="1">
    <citation type="journal article" date="2000" name="Biochim. Biophys. Acta">
        <title>cDNA sequence and tissue-specific expression of a basic liver-type fatty acid binding protein in adult zebrafish (Danio rerio).</title>
        <authorList>
            <person name="Denovan-Wright E.M."/>
            <person name="Pierce M."/>
            <person name="Sharma M.K."/>
            <person name="Wright J.M."/>
        </authorList>
    </citation>
    <scope>NUCLEOTIDE SEQUENCE [MRNA]</scope>
    <scope>TISSUE SPECIFICITY</scope>
</reference>
<reference key="2">
    <citation type="submission" date="2004-09" db="EMBL/GenBank/DDBJ databases">
        <authorList>
            <consortium name="NIH - Zebrafish Gene Collection (ZGC) project"/>
        </authorList>
    </citation>
    <scope>NUCLEOTIDE SEQUENCE [LARGE SCALE MRNA]</scope>
    <source>
        <tissue>Liver</tissue>
    </source>
</reference>
<reference key="3">
    <citation type="journal article" date="2003" name="Dev. Dyn.">
        <title>435-bp liver regulatory sequence in the liver fatty acid binding protein (L-FABP) gene is sufficient to modulate liver regional expression in transgenic zebrafish.</title>
        <authorList>
            <person name="Her G.M."/>
            <person name="Yeh Y.-H."/>
            <person name="Wu J.-L."/>
        </authorList>
    </citation>
    <scope>NUCLEOTIDE SEQUENCE [GENOMIC DNA] OF 1-59</scope>
    <scope>TISSUE SPECIFICITY</scope>
</reference>
<reference key="4">
    <citation type="journal article" date="2003" name="FEBS Lett.">
        <title>In vivo studies of liver-type fatty acid binding protein (L-FABP) gene expression in liver of transgenic zebrafish (Danio rerio).</title>
        <authorList>
            <person name="Her G.M."/>
            <person name="Chiang C.C."/>
            <person name="Chen W.Y."/>
            <person name="Wu J.L."/>
        </authorList>
    </citation>
    <scope>TISSUE SPECIFICITY</scope>
</reference>
<reference key="5">
    <citation type="journal article" date="2006" name="FEBS J.">
        <title>Hierarchical subfunctionalization of fabp1a, fabp1b and fabp10 tissue-specific expression may account for retention of these duplicated genes in the zebrafish (Danio rerio) genome.</title>
        <authorList>
            <person name="Sharma M.K."/>
            <person name="Liu R.Z."/>
            <person name="Thisse C."/>
            <person name="Thisse B."/>
            <person name="Denovan-Wright E.M."/>
            <person name="Wright J.M."/>
        </authorList>
    </citation>
    <scope>TISSUE SPECIFICITY</scope>
    <scope>GENE DUPLICATION</scope>
</reference>
<reference key="6">
    <citation type="journal article" date="2018" name="Nat. Commun.">
        <title>Deficiency in class III PI3-kinase confers postnatal lethality with IBD-like features in zebrafish.</title>
        <authorList>
            <person name="Zhao S."/>
            <person name="Xia J."/>
            <person name="Wu X."/>
            <person name="Zhang L."/>
            <person name="Wang P."/>
            <person name="Wang H."/>
            <person name="Li H."/>
            <person name="Wang X."/>
            <person name="Chen Y."/>
            <person name="Agnetti J."/>
            <person name="Li Y."/>
            <person name="Pei D."/>
            <person name="Shu X."/>
        </authorList>
    </citation>
    <scope>DEVELOPMENTAL STAGE</scope>
</reference>
<reference key="7">
    <citation type="journal article" date="2007" name="J. Biol. Chem.">
        <title>A single amino acid mutation in zebrafish (Danio rerio) liver bile acid-binding protein can change the stoichiometry of ligand binding.</title>
        <authorList>
            <person name="Capaldi S."/>
            <person name="Guariento M."/>
            <person name="Saccomani G."/>
            <person name="Fessas D."/>
            <person name="Perduca M."/>
            <person name="Monaco H.L."/>
        </authorList>
    </citation>
    <scope>X-RAY CRYSTALLOGRAPHY (1.5 ANGSTROMS) IN COMPLEX WITH CHOLATE</scope>
    <scope>MUTAGENESIS OF GLY-56 AND CYS-92</scope>
</reference>
<sequence length="126" mass="14004">MAFSGTWQVYAQENYEEFLRAISLPEEVIKLAKDVKPVTEIQQNGSDFTITSKTPGKTVTNSFTIGKEAEITTMDGKKLKCIVKLDGGKLVCRTDRFSHIQEIKAGEMVETLTVGGTTMIRKSKKI</sequence>
<protein>
    <recommendedName>
        <fullName>Fatty acid-binding protein 10-A, liver basic</fullName>
        <shortName>Zf-FABP10</shortName>
        <shortName>Zf-Lb-FABP</shortName>
    </recommendedName>
    <alternativeName>
        <fullName>Fatty acid-binding protein, liver</fullName>
    </alternativeName>
    <alternativeName>
        <fullName>Liver bile acid-binding protein</fullName>
        <shortName>L-BABP</shortName>
        <shortName>z-L-BABP</shortName>
    </alternativeName>
    <alternativeName>
        <fullName>Liver-type fatty acid-binding protein</fullName>
        <shortName>L-FABP</shortName>
        <shortName>Liver-type FABP</shortName>
    </alternativeName>
</protein>
<keyword id="KW-0002">3D-structure</keyword>
<keyword id="KW-0963">Cytoplasm</keyword>
<keyword id="KW-0446">Lipid-binding</keyword>
<keyword id="KW-1185">Reference proteome</keyword>
<keyword id="KW-0813">Transport</keyword>
<accession>Q9I8L5</accession>
<accession>Q8JHE8</accession>